<organism>
    <name type="scientific">Anaplasma phagocytophilum (strain HZ)</name>
    <dbReference type="NCBI Taxonomy" id="212042"/>
    <lineage>
        <taxon>Bacteria</taxon>
        <taxon>Pseudomonadati</taxon>
        <taxon>Pseudomonadota</taxon>
        <taxon>Alphaproteobacteria</taxon>
        <taxon>Rickettsiales</taxon>
        <taxon>Anaplasmataceae</taxon>
        <taxon>Anaplasma</taxon>
        <taxon>phagocytophilum group</taxon>
    </lineage>
</organism>
<comment type="function">
    <text evidence="1">Specifically methylates the uridine in position 2552 of 23S rRNA at the 2'-O position of the ribose in the fully assembled 50S ribosomal subunit.</text>
</comment>
<comment type="catalytic activity">
    <reaction evidence="1">
        <text>uridine(2552) in 23S rRNA + S-adenosyl-L-methionine = 2'-O-methyluridine(2552) in 23S rRNA + S-adenosyl-L-homocysteine + H(+)</text>
        <dbReference type="Rhea" id="RHEA:42720"/>
        <dbReference type="Rhea" id="RHEA-COMP:10202"/>
        <dbReference type="Rhea" id="RHEA-COMP:10203"/>
        <dbReference type="ChEBI" id="CHEBI:15378"/>
        <dbReference type="ChEBI" id="CHEBI:57856"/>
        <dbReference type="ChEBI" id="CHEBI:59789"/>
        <dbReference type="ChEBI" id="CHEBI:65315"/>
        <dbReference type="ChEBI" id="CHEBI:74478"/>
        <dbReference type="EC" id="2.1.1.166"/>
    </reaction>
</comment>
<comment type="subcellular location">
    <subcellularLocation>
        <location evidence="1">Cytoplasm</location>
    </subcellularLocation>
</comment>
<comment type="similarity">
    <text evidence="1">Belongs to the class I-like SAM-binding methyltransferase superfamily. RNA methyltransferase RlmE family.</text>
</comment>
<proteinExistence type="inferred from homology"/>
<protein>
    <recommendedName>
        <fullName evidence="1">Ribosomal RNA large subunit methyltransferase E</fullName>
        <ecNumber evidence="1">2.1.1.166</ecNumber>
    </recommendedName>
    <alternativeName>
        <fullName evidence="1">23S rRNA Um2552 methyltransferase</fullName>
    </alternativeName>
    <alternativeName>
        <fullName evidence="1">rRNA (uridine-2'-O-)-methyltransferase</fullName>
    </alternativeName>
</protein>
<name>RLME_ANAPZ</name>
<gene>
    <name evidence="1" type="primary">rlmE</name>
    <name evidence="1" type="synonym">ftsJ</name>
    <name evidence="1" type="synonym">rrmJ</name>
    <name type="ordered locus">APH_0504</name>
</gene>
<evidence type="ECO:0000255" key="1">
    <source>
        <dbReference type="HAMAP-Rule" id="MF_01547"/>
    </source>
</evidence>
<sequence length="247" mass="27859">MRSSNLTTTVHFLSPVFAAFFPSHGTEQEDAPIVRVKTAKGRKISSTNWIRRQVNDQYVSLAKKEGYRSRSAYKLIEINDKFKILQRGRFVLDLGSSPGGWAQVASKNTAIIDSTEPTVVAVDIQSMKDIHNVSFVQCDIDSDHDLLNEKLSGRKFDVVLSDMAPKSCGHRQVDHANIINLCELARDIALEYLNPNGSFVTKLLHGEYEQEFRRSIMTHFGVVSYFKPKSSRKDSSEIYLVALKFKG</sequence>
<feature type="chain" id="PRO_0000282724" description="Ribosomal RNA large subunit methyltransferase E">
    <location>
        <begin position="1"/>
        <end position="247"/>
    </location>
</feature>
<feature type="active site" description="Proton acceptor" evidence="1">
    <location>
        <position position="202"/>
    </location>
</feature>
<feature type="binding site" evidence="1">
    <location>
        <position position="99"/>
    </location>
    <ligand>
        <name>S-adenosyl-L-methionine</name>
        <dbReference type="ChEBI" id="CHEBI:59789"/>
    </ligand>
</feature>
<feature type="binding site" evidence="1">
    <location>
        <position position="101"/>
    </location>
    <ligand>
        <name>S-adenosyl-L-methionine</name>
        <dbReference type="ChEBI" id="CHEBI:59789"/>
    </ligand>
</feature>
<feature type="binding site" evidence="1">
    <location>
        <position position="123"/>
    </location>
    <ligand>
        <name>S-adenosyl-L-methionine</name>
        <dbReference type="ChEBI" id="CHEBI:59789"/>
    </ligand>
</feature>
<feature type="binding site" evidence="1">
    <location>
        <position position="139"/>
    </location>
    <ligand>
        <name>S-adenosyl-L-methionine</name>
        <dbReference type="ChEBI" id="CHEBI:59789"/>
    </ligand>
</feature>
<feature type="binding site" evidence="1">
    <location>
        <position position="162"/>
    </location>
    <ligand>
        <name>S-adenosyl-L-methionine</name>
        <dbReference type="ChEBI" id="CHEBI:59789"/>
    </ligand>
</feature>
<accession>Q2GKK2</accession>
<reference key="1">
    <citation type="journal article" date="2006" name="PLoS Genet.">
        <title>Comparative genomics of emerging human ehrlichiosis agents.</title>
        <authorList>
            <person name="Dunning Hotopp J.C."/>
            <person name="Lin M."/>
            <person name="Madupu R."/>
            <person name="Crabtree J."/>
            <person name="Angiuoli S.V."/>
            <person name="Eisen J.A."/>
            <person name="Seshadri R."/>
            <person name="Ren Q."/>
            <person name="Wu M."/>
            <person name="Utterback T.R."/>
            <person name="Smith S."/>
            <person name="Lewis M."/>
            <person name="Khouri H."/>
            <person name="Zhang C."/>
            <person name="Niu H."/>
            <person name="Lin Q."/>
            <person name="Ohashi N."/>
            <person name="Zhi N."/>
            <person name="Nelson W.C."/>
            <person name="Brinkac L.M."/>
            <person name="Dodson R.J."/>
            <person name="Rosovitz M.J."/>
            <person name="Sundaram J.P."/>
            <person name="Daugherty S.C."/>
            <person name="Davidsen T."/>
            <person name="Durkin A.S."/>
            <person name="Gwinn M.L."/>
            <person name="Haft D.H."/>
            <person name="Selengut J.D."/>
            <person name="Sullivan S.A."/>
            <person name="Zafar N."/>
            <person name="Zhou L."/>
            <person name="Benahmed F."/>
            <person name="Forberger H."/>
            <person name="Halpin R."/>
            <person name="Mulligan S."/>
            <person name="Robinson J."/>
            <person name="White O."/>
            <person name="Rikihisa Y."/>
            <person name="Tettelin H."/>
        </authorList>
    </citation>
    <scope>NUCLEOTIDE SEQUENCE [LARGE SCALE GENOMIC DNA]</scope>
    <source>
        <strain>HZ</strain>
    </source>
</reference>
<keyword id="KW-0963">Cytoplasm</keyword>
<keyword id="KW-0489">Methyltransferase</keyword>
<keyword id="KW-0698">rRNA processing</keyword>
<keyword id="KW-0949">S-adenosyl-L-methionine</keyword>
<keyword id="KW-0808">Transferase</keyword>
<dbReference type="EC" id="2.1.1.166" evidence="1"/>
<dbReference type="EMBL" id="CP000235">
    <property type="protein sequence ID" value="ABD43435.1"/>
    <property type="molecule type" value="Genomic_DNA"/>
</dbReference>
<dbReference type="SMR" id="Q2GKK2"/>
<dbReference type="STRING" id="212042.APH_0504"/>
<dbReference type="PaxDb" id="212042-APH_0504"/>
<dbReference type="EnsemblBacteria" id="ABD43435">
    <property type="protein sequence ID" value="ABD43435"/>
    <property type="gene ID" value="APH_0504"/>
</dbReference>
<dbReference type="KEGG" id="aph:APH_0504"/>
<dbReference type="eggNOG" id="COG0293">
    <property type="taxonomic scope" value="Bacteria"/>
</dbReference>
<dbReference type="HOGENOM" id="CLU_009422_4_0_5"/>
<dbReference type="Proteomes" id="UP000001943">
    <property type="component" value="Chromosome"/>
</dbReference>
<dbReference type="GO" id="GO:0005737">
    <property type="term" value="C:cytoplasm"/>
    <property type="evidence" value="ECO:0007669"/>
    <property type="project" value="UniProtKB-SubCell"/>
</dbReference>
<dbReference type="GO" id="GO:0008650">
    <property type="term" value="F:rRNA (uridine-2'-O-)-methyltransferase activity"/>
    <property type="evidence" value="ECO:0007669"/>
    <property type="project" value="UniProtKB-UniRule"/>
</dbReference>
<dbReference type="Gene3D" id="3.40.50.150">
    <property type="entry name" value="Vaccinia Virus protein VP39"/>
    <property type="match status" value="1"/>
</dbReference>
<dbReference type="HAMAP" id="MF_01547">
    <property type="entry name" value="RNA_methyltr_E"/>
    <property type="match status" value="1"/>
</dbReference>
<dbReference type="InterPro" id="IPR050082">
    <property type="entry name" value="RNA_methyltr_RlmE"/>
</dbReference>
<dbReference type="InterPro" id="IPR002877">
    <property type="entry name" value="RNA_MeTrfase_FtsJ_dom"/>
</dbReference>
<dbReference type="InterPro" id="IPR015507">
    <property type="entry name" value="rRNA-MeTfrase_E"/>
</dbReference>
<dbReference type="InterPro" id="IPR029063">
    <property type="entry name" value="SAM-dependent_MTases_sf"/>
</dbReference>
<dbReference type="PANTHER" id="PTHR10920">
    <property type="entry name" value="RIBOSOMAL RNA METHYLTRANSFERASE"/>
    <property type="match status" value="1"/>
</dbReference>
<dbReference type="PANTHER" id="PTHR10920:SF18">
    <property type="entry name" value="RRNA METHYLTRANSFERASE 2, MITOCHONDRIAL"/>
    <property type="match status" value="1"/>
</dbReference>
<dbReference type="Pfam" id="PF01728">
    <property type="entry name" value="FtsJ"/>
    <property type="match status" value="1"/>
</dbReference>
<dbReference type="PIRSF" id="PIRSF005461">
    <property type="entry name" value="23S_rRNA_mtase"/>
    <property type="match status" value="1"/>
</dbReference>
<dbReference type="SUPFAM" id="SSF53335">
    <property type="entry name" value="S-adenosyl-L-methionine-dependent methyltransferases"/>
    <property type="match status" value="1"/>
</dbReference>